<dbReference type="EMBL" id="CP000383">
    <property type="protein sequence ID" value="ABG60389.1"/>
    <property type="molecule type" value="Genomic_DNA"/>
</dbReference>
<dbReference type="RefSeq" id="WP_011586498.1">
    <property type="nucleotide sequence ID" value="NC_008255.1"/>
</dbReference>
<dbReference type="SMR" id="Q11QC5"/>
<dbReference type="STRING" id="269798.CHU_3149"/>
<dbReference type="KEGG" id="chu:CHU_3149"/>
<dbReference type="eggNOG" id="COG0199">
    <property type="taxonomic scope" value="Bacteria"/>
</dbReference>
<dbReference type="HOGENOM" id="CLU_139869_0_0_10"/>
<dbReference type="OrthoDB" id="9810484at2"/>
<dbReference type="Proteomes" id="UP000001822">
    <property type="component" value="Chromosome"/>
</dbReference>
<dbReference type="GO" id="GO:0005737">
    <property type="term" value="C:cytoplasm"/>
    <property type="evidence" value="ECO:0007669"/>
    <property type="project" value="UniProtKB-ARBA"/>
</dbReference>
<dbReference type="GO" id="GO:0015935">
    <property type="term" value="C:small ribosomal subunit"/>
    <property type="evidence" value="ECO:0007669"/>
    <property type="project" value="TreeGrafter"/>
</dbReference>
<dbReference type="GO" id="GO:0019843">
    <property type="term" value="F:rRNA binding"/>
    <property type="evidence" value="ECO:0007669"/>
    <property type="project" value="UniProtKB-UniRule"/>
</dbReference>
<dbReference type="GO" id="GO:0003735">
    <property type="term" value="F:structural constituent of ribosome"/>
    <property type="evidence" value="ECO:0007669"/>
    <property type="project" value="InterPro"/>
</dbReference>
<dbReference type="GO" id="GO:0006412">
    <property type="term" value="P:translation"/>
    <property type="evidence" value="ECO:0007669"/>
    <property type="project" value="UniProtKB-UniRule"/>
</dbReference>
<dbReference type="Gene3D" id="4.10.830.10">
    <property type="entry name" value="30s Ribosomal Protein S14, Chain N"/>
    <property type="match status" value="1"/>
</dbReference>
<dbReference type="HAMAP" id="MF_00537">
    <property type="entry name" value="Ribosomal_uS14_1"/>
    <property type="match status" value="1"/>
</dbReference>
<dbReference type="InterPro" id="IPR001209">
    <property type="entry name" value="Ribosomal_uS14"/>
</dbReference>
<dbReference type="InterPro" id="IPR023036">
    <property type="entry name" value="Ribosomal_uS14_bac/plastid"/>
</dbReference>
<dbReference type="InterPro" id="IPR043140">
    <property type="entry name" value="Ribosomal_uS14_sf"/>
</dbReference>
<dbReference type="NCBIfam" id="NF006477">
    <property type="entry name" value="PRK08881.1"/>
    <property type="match status" value="1"/>
</dbReference>
<dbReference type="PANTHER" id="PTHR19836">
    <property type="entry name" value="30S RIBOSOMAL PROTEIN S14"/>
    <property type="match status" value="1"/>
</dbReference>
<dbReference type="PANTHER" id="PTHR19836:SF19">
    <property type="entry name" value="SMALL RIBOSOMAL SUBUNIT PROTEIN US14M"/>
    <property type="match status" value="1"/>
</dbReference>
<dbReference type="Pfam" id="PF00253">
    <property type="entry name" value="Ribosomal_S14"/>
    <property type="match status" value="1"/>
</dbReference>
<dbReference type="SUPFAM" id="SSF57716">
    <property type="entry name" value="Glucocorticoid receptor-like (DNA-binding domain)"/>
    <property type="match status" value="1"/>
</dbReference>
<reference key="1">
    <citation type="journal article" date="2007" name="Appl. Environ. Microbiol.">
        <title>Genome sequence of the cellulolytic gliding bacterium Cytophaga hutchinsonii.</title>
        <authorList>
            <person name="Xie G."/>
            <person name="Bruce D.C."/>
            <person name="Challacombe J.F."/>
            <person name="Chertkov O."/>
            <person name="Detter J.C."/>
            <person name="Gilna P."/>
            <person name="Han C.S."/>
            <person name="Lucas S."/>
            <person name="Misra M."/>
            <person name="Myers G.L."/>
            <person name="Richardson P."/>
            <person name="Tapia R."/>
            <person name="Thayer N."/>
            <person name="Thompson L.S."/>
            <person name="Brettin T.S."/>
            <person name="Henrissat B."/>
            <person name="Wilson D.B."/>
            <person name="McBride M.J."/>
        </authorList>
    </citation>
    <scope>NUCLEOTIDE SEQUENCE [LARGE SCALE GENOMIC DNA]</scope>
    <source>
        <strain>ATCC 33406 / DSM 1761 / JCM 20678 / CIP 103989 / IAM 12607 / NBRC 15051 / NCIMB 9469 / D465</strain>
    </source>
</reference>
<protein>
    <recommendedName>
        <fullName evidence="1">Small ribosomal subunit protein uS14</fullName>
    </recommendedName>
    <alternativeName>
        <fullName evidence="2">30S ribosomal protein S14</fullName>
    </alternativeName>
</protein>
<proteinExistence type="inferred from homology"/>
<accession>Q11QC5</accession>
<name>RS14_CYTH3</name>
<evidence type="ECO:0000255" key="1">
    <source>
        <dbReference type="HAMAP-Rule" id="MF_00537"/>
    </source>
</evidence>
<evidence type="ECO:0000305" key="2"/>
<organism>
    <name type="scientific">Cytophaga hutchinsonii (strain ATCC 33406 / DSM 1761 / CIP 103989 / NBRC 15051 / NCIMB 9469 / D465)</name>
    <dbReference type="NCBI Taxonomy" id="269798"/>
    <lineage>
        <taxon>Bacteria</taxon>
        <taxon>Pseudomonadati</taxon>
        <taxon>Bacteroidota</taxon>
        <taxon>Cytophagia</taxon>
        <taxon>Cytophagales</taxon>
        <taxon>Cytophagaceae</taxon>
        <taxon>Cytophaga</taxon>
    </lineage>
</organism>
<keyword id="KW-1185">Reference proteome</keyword>
<keyword id="KW-0687">Ribonucleoprotein</keyword>
<keyword id="KW-0689">Ribosomal protein</keyword>
<keyword id="KW-0694">RNA-binding</keyword>
<keyword id="KW-0699">rRNA-binding</keyword>
<feature type="chain" id="PRO_1000128377" description="Small ribosomal subunit protein uS14">
    <location>
        <begin position="1"/>
        <end position="89"/>
    </location>
</feature>
<sequence>MAKESVKARERKKQATVERFAAKRKALKEAGDYVGLDKLPKNASPVRLHNRCKLTGRPRGYMRKFGINRVTFRELAANGKIPGVTRASW</sequence>
<gene>
    <name evidence="1" type="primary">rpsN</name>
    <name type="ordered locus">CHU_3149</name>
</gene>
<comment type="function">
    <text evidence="1">Binds 16S rRNA, required for the assembly of 30S particles and may also be responsible for determining the conformation of the 16S rRNA at the A site.</text>
</comment>
<comment type="subunit">
    <text evidence="1">Part of the 30S ribosomal subunit. Contacts proteins S3 and S10.</text>
</comment>
<comment type="similarity">
    <text evidence="1">Belongs to the universal ribosomal protein uS14 family.</text>
</comment>